<evidence type="ECO:0000255" key="1">
    <source>
        <dbReference type="HAMAP-Rule" id="MF_00393"/>
    </source>
</evidence>
<protein>
    <recommendedName>
        <fullName evidence="1">Glycerol-3-phosphate acyltransferase</fullName>
        <shortName evidence="1">GPAT</shortName>
        <ecNumber evidence="1">2.3.1.15</ecNumber>
    </recommendedName>
</protein>
<accession>Q089E1</accession>
<sequence length="807" mass="91990">MSKPDSIFLRALRWIQKWMVQTIVVPHDPFDDLNIDPTKPLVYLMKTESISDIAALSEITEGFGLPSPYEPLQLDGLTVPRVVCLEGRKPLFGKRESGDKFLNYFTSLLSLHSESPELDIQLVPVCLYWGRTPGKEEDSMKAAVFERENPTWLRKWLMILFLGRHNFVQFSNALSLRHMADEHGTDKRIAHKLTRVARVHFRRQRKVMTGPQLPNRQALFASLLKSESIKKAIEEESANKKVTVEKARETAIEYLDEIAADYSDSLVRIAERFLTWLWNKLYSGINIKGAEQVRQLHHDGHEIVYVPCHRSHMDYLLLSYILYYQGMVPPHIAAGINLNFWPAGPMFRRGGAFFIRRSFNGNKLYTAVFREYLDQLFAKGYAVEYFTEGGRSRTGRLLAPKTGMLAMTINSVLRGIERPVTLVPVYLGYDHVMEVATYHKELSGKKKKKESVWQVFGAIRKLGNFGQGYVNFGEPINLQQFLNQQAPEWRDELAKDPDQKPSWFTPSVNLLANRVMTNINGAAAASSVTLTSLVLLASEQNALERSQLERQLDLYLALLKTVPYTEYASVAEGNGKSIVDHCLSLNKFVSTKDLIGEIISVDEKIAITMSYYRNNIIHLMALPSLIASCLVHYDVCDRQRIHAIVMDFYPLLKAELFMSIDDVPKHVDCILDFMVEQGLLTGSDQFEITPRHITQVLLLAETISETLQRYAIIFNLLAIKPDLERSELERDSHLLAQRLGALHGITAPEFYDKKLYNTLSVKLKELGYLCSDEHRAEVIRIRDNANKLLSSLVRQTIVDSVEAEHGQ</sequence>
<reference key="1">
    <citation type="submission" date="2006-08" db="EMBL/GenBank/DDBJ databases">
        <title>Complete sequence of Shewanella frigidimarina NCIMB 400.</title>
        <authorList>
            <consortium name="US DOE Joint Genome Institute"/>
            <person name="Copeland A."/>
            <person name="Lucas S."/>
            <person name="Lapidus A."/>
            <person name="Barry K."/>
            <person name="Detter J.C."/>
            <person name="Glavina del Rio T."/>
            <person name="Hammon N."/>
            <person name="Israni S."/>
            <person name="Dalin E."/>
            <person name="Tice H."/>
            <person name="Pitluck S."/>
            <person name="Fredrickson J.K."/>
            <person name="Kolker E."/>
            <person name="McCuel L.A."/>
            <person name="DiChristina T."/>
            <person name="Nealson K.H."/>
            <person name="Newman D."/>
            <person name="Tiedje J.M."/>
            <person name="Zhou J."/>
            <person name="Romine M.F."/>
            <person name="Culley D.E."/>
            <person name="Serres M."/>
            <person name="Chertkov O."/>
            <person name="Brettin T."/>
            <person name="Bruce D."/>
            <person name="Han C."/>
            <person name="Tapia R."/>
            <person name="Gilna P."/>
            <person name="Schmutz J."/>
            <person name="Larimer F."/>
            <person name="Land M."/>
            <person name="Hauser L."/>
            <person name="Kyrpides N."/>
            <person name="Mikhailova N."/>
            <person name="Richardson P."/>
        </authorList>
    </citation>
    <scope>NUCLEOTIDE SEQUENCE [LARGE SCALE GENOMIC DNA]</scope>
    <source>
        <strain>NCIMB 400</strain>
    </source>
</reference>
<name>PLSB_SHEFN</name>
<comment type="catalytic activity">
    <reaction evidence="1">
        <text>sn-glycerol 3-phosphate + an acyl-CoA = a 1-acyl-sn-glycero-3-phosphate + CoA</text>
        <dbReference type="Rhea" id="RHEA:15325"/>
        <dbReference type="ChEBI" id="CHEBI:57287"/>
        <dbReference type="ChEBI" id="CHEBI:57597"/>
        <dbReference type="ChEBI" id="CHEBI:57970"/>
        <dbReference type="ChEBI" id="CHEBI:58342"/>
        <dbReference type="EC" id="2.3.1.15"/>
    </reaction>
</comment>
<comment type="pathway">
    <text evidence="1">Phospholipid metabolism; CDP-diacylglycerol biosynthesis; CDP-diacylglycerol from sn-glycerol 3-phosphate: step 1/3.</text>
</comment>
<comment type="subcellular location">
    <subcellularLocation>
        <location evidence="1">Cell inner membrane</location>
        <topology evidence="1">Peripheral membrane protein</topology>
        <orientation evidence="1">Cytoplasmic side</orientation>
    </subcellularLocation>
</comment>
<comment type="domain">
    <text evidence="1">The HXXXXD motif is essential for acyltransferase activity and may constitute the binding site for the phosphate moiety of the glycerol-3-phosphate.</text>
</comment>
<comment type="similarity">
    <text evidence="1">Belongs to the GPAT/DAPAT family.</text>
</comment>
<organism>
    <name type="scientific">Shewanella frigidimarina (strain NCIMB 400)</name>
    <dbReference type="NCBI Taxonomy" id="318167"/>
    <lineage>
        <taxon>Bacteria</taxon>
        <taxon>Pseudomonadati</taxon>
        <taxon>Pseudomonadota</taxon>
        <taxon>Gammaproteobacteria</taxon>
        <taxon>Alteromonadales</taxon>
        <taxon>Shewanellaceae</taxon>
        <taxon>Shewanella</taxon>
    </lineage>
</organism>
<dbReference type="EC" id="2.3.1.15" evidence="1"/>
<dbReference type="EMBL" id="CP000447">
    <property type="protein sequence ID" value="ABI70124.1"/>
    <property type="molecule type" value="Genomic_DNA"/>
</dbReference>
<dbReference type="RefSeq" id="WP_011635751.1">
    <property type="nucleotide sequence ID" value="NC_008345.1"/>
</dbReference>
<dbReference type="SMR" id="Q089E1"/>
<dbReference type="STRING" id="318167.Sfri_0261"/>
<dbReference type="KEGG" id="sfr:Sfri_0261"/>
<dbReference type="eggNOG" id="COG2937">
    <property type="taxonomic scope" value="Bacteria"/>
</dbReference>
<dbReference type="HOGENOM" id="CLU_015407_0_0_6"/>
<dbReference type="OrthoDB" id="335193at2"/>
<dbReference type="UniPathway" id="UPA00557">
    <property type="reaction ID" value="UER00612"/>
</dbReference>
<dbReference type="Proteomes" id="UP000000684">
    <property type="component" value="Chromosome"/>
</dbReference>
<dbReference type="GO" id="GO:0005886">
    <property type="term" value="C:plasma membrane"/>
    <property type="evidence" value="ECO:0007669"/>
    <property type="project" value="UniProtKB-SubCell"/>
</dbReference>
<dbReference type="GO" id="GO:0004366">
    <property type="term" value="F:glycerol-3-phosphate O-acyltransferase activity"/>
    <property type="evidence" value="ECO:0007669"/>
    <property type="project" value="UniProtKB-UniRule"/>
</dbReference>
<dbReference type="GO" id="GO:0016024">
    <property type="term" value="P:CDP-diacylglycerol biosynthetic process"/>
    <property type="evidence" value="ECO:0007669"/>
    <property type="project" value="UniProtKB-UniRule"/>
</dbReference>
<dbReference type="GO" id="GO:0006631">
    <property type="term" value="P:fatty acid metabolic process"/>
    <property type="evidence" value="ECO:0007669"/>
    <property type="project" value="TreeGrafter"/>
</dbReference>
<dbReference type="CDD" id="cd07993">
    <property type="entry name" value="LPLAT_DHAPAT-like"/>
    <property type="match status" value="1"/>
</dbReference>
<dbReference type="HAMAP" id="MF_00393">
    <property type="entry name" value="Glyc3P_acyltrans"/>
    <property type="match status" value="1"/>
</dbReference>
<dbReference type="InterPro" id="IPR022284">
    <property type="entry name" value="GPAT/DHAPAT"/>
</dbReference>
<dbReference type="InterPro" id="IPR045520">
    <property type="entry name" value="GPAT/DHAPAT_C"/>
</dbReference>
<dbReference type="InterPro" id="IPR041728">
    <property type="entry name" value="GPAT/DHAPAT_LPLAT"/>
</dbReference>
<dbReference type="InterPro" id="IPR028354">
    <property type="entry name" value="GPAT_PlsB"/>
</dbReference>
<dbReference type="InterPro" id="IPR002123">
    <property type="entry name" value="Plipid/glycerol_acylTrfase"/>
</dbReference>
<dbReference type="NCBIfam" id="TIGR03703">
    <property type="entry name" value="plsB"/>
    <property type="match status" value="1"/>
</dbReference>
<dbReference type="NCBIfam" id="NF003441">
    <property type="entry name" value="PRK04974.1"/>
    <property type="match status" value="1"/>
</dbReference>
<dbReference type="PANTHER" id="PTHR12563:SF17">
    <property type="entry name" value="DIHYDROXYACETONE PHOSPHATE ACYLTRANSFERASE"/>
    <property type="match status" value="1"/>
</dbReference>
<dbReference type="PANTHER" id="PTHR12563">
    <property type="entry name" value="GLYCEROL-3-PHOSPHATE ACYLTRANSFERASE"/>
    <property type="match status" value="1"/>
</dbReference>
<dbReference type="Pfam" id="PF01553">
    <property type="entry name" value="Acyltransferase"/>
    <property type="match status" value="1"/>
</dbReference>
<dbReference type="Pfam" id="PF19277">
    <property type="entry name" value="GPAT_C"/>
    <property type="match status" value="1"/>
</dbReference>
<dbReference type="PIRSF" id="PIRSF500064">
    <property type="entry name" value="GPAT"/>
    <property type="match status" value="1"/>
</dbReference>
<dbReference type="PIRSF" id="PIRSF000437">
    <property type="entry name" value="GPAT_DHAPAT"/>
    <property type="match status" value="1"/>
</dbReference>
<dbReference type="SMART" id="SM00563">
    <property type="entry name" value="PlsC"/>
    <property type="match status" value="1"/>
</dbReference>
<dbReference type="SUPFAM" id="SSF69593">
    <property type="entry name" value="Glycerol-3-phosphate (1)-acyltransferase"/>
    <property type="match status" value="1"/>
</dbReference>
<feature type="chain" id="PRO_1000049457" description="Glycerol-3-phosphate acyltransferase">
    <location>
        <begin position="1"/>
        <end position="807"/>
    </location>
</feature>
<feature type="short sequence motif" description="HXXXXD motif">
    <location>
        <begin position="308"/>
        <end position="313"/>
    </location>
</feature>
<gene>
    <name evidence="1" type="primary">plsB</name>
    <name type="ordered locus">Sfri_0261</name>
</gene>
<proteinExistence type="inferred from homology"/>
<keyword id="KW-0012">Acyltransferase</keyword>
<keyword id="KW-0997">Cell inner membrane</keyword>
<keyword id="KW-1003">Cell membrane</keyword>
<keyword id="KW-0444">Lipid biosynthesis</keyword>
<keyword id="KW-0443">Lipid metabolism</keyword>
<keyword id="KW-0472">Membrane</keyword>
<keyword id="KW-0594">Phospholipid biosynthesis</keyword>
<keyword id="KW-1208">Phospholipid metabolism</keyword>
<keyword id="KW-1185">Reference proteome</keyword>
<keyword id="KW-0808">Transferase</keyword>